<protein>
    <recommendedName>
        <fullName evidence="1">Porphobilinogen deaminase</fullName>
        <shortName evidence="1">PBG</shortName>
        <ecNumber evidence="1">2.5.1.61</ecNumber>
    </recommendedName>
    <alternativeName>
        <fullName evidence="1">Hydroxymethylbilane synthase</fullName>
        <shortName evidence="1">HMBS</shortName>
    </alternativeName>
    <alternativeName>
        <fullName evidence="1">Pre-uroporphyrinogen synthase</fullName>
    </alternativeName>
</protein>
<sequence length="334" mass="35082">MNSETPAAGPQQAQPPATLTIASRESRLAMWQAEHVRDALRKLYPACDVKILGMTTRGDQILDRTLSKVGGKGLFVKELEAALADGRADLAVHSLKDVPMALPDGFSLAAIMEREDPRDAFVSNDYASLDALPAGAVVGTSSLRREAMLRSRYPHLEVLPLRGNLDTRLAKLDRGDYAAIILAAAGLKRLGLEARIRALLDVEASPPAAGQGALGIEIAAHRDDVAAWLAPLHDPQTALAVEAERMVSRALGGSCEVPLAAHAVWRAGELYLTGRVSTTDGKRVLTAEECGAVVTVADALALGRAVSDELEAQGALDIVQALLAGSQAAGKGDA</sequence>
<reference key="1">
    <citation type="submission" date="2008-02" db="EMBL/GenBank/DDBJ databases">
        <title>Complete sequence of chromosome 1 of Burkholderia cenocepacia MC0-3.</title>
        <authorList>
            <person name="Copeland A."/>
            <person name="Lucas S."/>
            <person name="Lapidus A."/>
            <person name="Barry K."/>
            <person name="Bruce D."/>
            <person name="Goodwin L."/>
            <person name="Glavina del Rio T."/>
            <person name="Dalin E."/>
            <person name="Tice H."/>
            <person name="Pitluck S."/>
            <person name="Chain P."/>
            <person name="Malfatti S."/>
            <person name="Shin M."/>
            <person name="Vergez L."/>
            <person name="Schmutz J."/>
            <person name="Larimer F."/>
            <person name="Land M."/>
            <person name="Hauser L."/>
            <person name="Kyrpides N."/>
            <person name="Mikhailova N."/>
            <person name="Tiedje J."/>
            <person name="Richardson P."/>
        </authorList>
    </citation>
    <scope>NUCLEOTIDE SEQUENCE [LARGE SCALE GENOMIC DNA]</scope>
    <source>
        <strain>MC0-3</strain>
    </source>
</reference>
<keyword id="KW-0627">Porphyrin biosynthesis</keyword>
<keyword id="KW-0808">Transferase</keyword>
<feature type="chain" id="PRO_1000114137" description="Porphobilinogen deaminase">
    <location>
        <begin position="1"/>
        <end position="334"/>
    </location>
</feature>
<feature type="modified residue" description="S-(dipyrrolylmethanemethyl)cysteine" evidence="1">
    <location>
        <position position="255"/>
    </location>
</feature>
<proteinExistence type="inferred from homology"/>
<organism>
    <name type="scientific">Burkholderia orbicola (strain MC0-3)</name>
    <dbReference type="NCBI Taxonomy" id="406425"/>
    <lineage>
        <taxon>Bacteria</taxon>
        <taxon>Pseudomonadati</taxon>
        <taxon>Pseudomonadota</taxon>
        <taxon>Betaproteobacteria</taxon>
        <taxon>Burkholderiales</taxon>
        <taxon>Burkholderiaceae</taxon>
        <taxon>Burkholderia</taxon>
        <taxon>Burkholderia cepacia complex</taxon>
        <taxon>Burkholderia orbicola</taxon>
    </lineage>
</organism>
<comment type="function">
    <text evidence="1">Tetrapolymerization of the monopyrrole PBG into the hydroxymethylbilane pre-uroporphyrinogen in several discrete steps.</text>
</comment>
<comment type="catalytic activity">
    <reaction evidence="1">
        <text>4 porphobilinogen + H2O = hydroxymethylbilane + 4 NH4(+)</text>
        <dbReference type="Rhea" id="RHEA:13185"/>
        <dbReference type="ChEBI" id="CHEBI:15377"/>
        <dbReference type="ChEBI" id="CHEBI:28938"/>
        <dbReference type="ChEBI" id="CHEBI:57845"/>
        <dbReference type="ChEBI" id="CHEBI:58126"/>
        <dbReference type="EC" id="2.5.1.61"/>
    </reaction>
</comment>
<comment type="cofactor">
    <cofactor evidence="1">
        <name>dipyrromethane</name>
        <dbReference type="ChEBI" id="CHEBI:60342"/>
    </cofactor>
    <text evidence="1">Binds 1 dipyrromethane group covalently.</text>
</comment>
<comment type="pathway">
    <text evidence="1">Porphyrin-containing compound metabolism; protoporphyrin-IX biosynthesis; coproporphyrinogen-III from 5-aminolevulinate: step 2/4.</text>
</comment>
<comment type="subunit">
    <text evidence="1">Monomer.</text>
</comment>
<comment type="miscellaneous">
    <text evidence="1">The porphobilinogen subunits are added to the dipyrromethane group.</text>
</comment>
<comment type="similarity">
    <text evidence="1">Belongs to the HMBS family.</text>
</comment>
<dbReference type="EC" id="2.5.1.61" evidence="1"/>
<dbReference type="EMBL" id="CP000958">
    <property type="protein sequence ID" value="ACA91590.1"/>
    <property type="molecule type" value="Genomic_DNA"/>
</dbReference>
<dbReference type="RefSeq" id="WP_012329000.1">
    <property type="nucleotide sequence ID" value="NC_010508.1"/>
</dbReference>
<dbReference type="SMR" id="B1JWR0"/>
<dbReference type="GeneID" id="83049219"/>
<dbReference type="KEGG" id="bcm:Bcenmc03_2429"/>
<dbReference type="HOGENOM" id="CLU_019704_0_2_4"/>
<dbReference type="UniPathway" id="UPA00251">
    <property type="reaction ID" value="UER00319"/>
</dbReference>
<dbReference type="Proteomes" id="UP000002169">
    <property type="component" value="Chromosome 1"/>
</dbReference>
<dbReference type="GO" id="GO:0005737">
    <property type="term" value="C:cytoplasm"/>
    <property type="evidence" value="ECO:0007669"/>
    <property type="project" value="TreeGrafter"/>
</dbReference>
<dbReference type="GO" id="GO:0004418">
    <property type="term" value="F:hydroxymethylbilane synthase activity"/>
    <property type="evidence" value="ECO:0007669"/>
    <property type="project" value="UniProtKB-UniRule"/>
</dbReference>
<dbReference type="GO" id="GO:0006782">
    <property type="term" value="P:protoporphyrinogen IX biosynthetic process"/>
    <property type="evidence" value="ECO:0007669"/>
    <property type="project" value="UniProtKB-UniRule"/>
</dbReference>
<dbReference type="CDD" id="cd13646">
    <property type="entry name" value="PBP2_EcHMBS_like"/>
    <property type="match status" value="1"/>
</dbReference>
<dbReference type="FunFam" id="3.40.190.10:FF:000004">
    <property type="entry name" value="Porphobilinogen deaminase"/>
    <property type="match status" value="1"/>
</dbReference>
<dbReference type="FunFam" id="3.40.190.10:FF:000005">
    <property type="entry name" value="Porphobilinogen deaminase"/>
    <property type="match status" value="1"/>
</dbReference>
<dbReference type="Gene3D" id="3.40.190.10">
    <property type="entry name" value="Periplasmic binding protein-like II"/>
    <property type="match status" value="2"/>
</dbReference>
<dbReference type="Gene3D" id="3.30.160.40">
    <property type="entry name" value="Porphobilinogen deaminase, C-terminal domain"/>
    <property type="match status" value="1"/>
</dbReference>
<dbReference type="HAMAP" id="MF_00260">
    <property type="entry name" value="Porphobil_deam"/>
    <property type="match status" value="1"/>
</dbReference>
<dbReference type="InterPro" id="IPR000860">
    <property type="entry name" value="HemC"/>
</dbReference>
<dbReference type="InterPro" id="IPR022419">
    <property type="entry name" value="Porphobilin_deaminase_cofac_BS"/>
</dbReference>
<dbReference type="InterPro" id="IPR022417">
    <property type="entry name" value="Porphobilin_deaminase_N"/>
</dbReference>
<dbReference type="InterPro" id="IPR022418">
    <property type="entry name" value="Porphobilinogen_deaminase_C"/>
</dbReference>
<dbReference type="InterPro" id="IPR036803">
    <property type="entry name" value="Porphobilinogen_deaminase_C_sf"/>
</dbReference>
<dbReference type="NCBIfam" id="TIGR00212">
    <property type="entry name" value="hemC"/>
    <property type="match status" value="1"/>
</dbReference>
<dbReference type="PANTHER" id="PTHR11557">
    <property type="entry name" value="PORPHOBILINOGEN DEAMINASE"/>
    <property type="match status" value="1"/>
</dbReference>
<dbReference type="PANTHER" id="PTHR11557:SF0">
    <property type="entry name" value="PORPHOBILINOGEN DEAMINASE"/>
    <property type="match status" value="1"/>
</dbReference>
<dbReference type="Pfam" id="PF01379">
    <property type="entry name" value="Porphobil_deam"/>
    <property type="match status" value="1"/>
</dbReference>
<dbReference type="Pfam" id="PF03900">
    <property type="entry name" value="Porphobil_deamC"/>
    <property type="match status" value="1"/>
</dbReference>
<dbReference type="PIRSF" id="PIRSF001438">
    <property type="entry name" value="4pyrrol_synth_OHMeBilane_synth"/>
    <property type="match status" value="1"/>
</dbReference>
<dbReference type="PRINTS" id="PR00151">
    <property type="entry name" value="PORPHBDMNASE"/>
</dbReference>
<dbReference type="SUPFAM" id="SSF53850">
    <property type="entry name" value="Periplasmic binding protein-like II"/>
    <property type="match status" value="1"/>
</dbReference>
<dbReference type="SUPFAM" id="SSF54782">
    <property type="entry name" value="Porphobilinogen deaminase (hydroxymethylbilane synthase), C-terminal domain"/>
    <property type="match status" value="1"/>
</dbReference>
<dbReference type="PROSITE" id="PS00533">
    <property type="entry name" value="PORPHOBILINOGEN_DEAM"/>
    <property type="match status" value="1"/>
</dbReference>
<name>HEM3_BURO0</name>
<evidence type="ECO:0000255" key="1">
    <source>
        <dbReference type="HAMAP-Rule" id="MF_00260"/>
    </source>
</evidence>
<accession>B1JWR0</accession>
<gene>
    <name evidence="1" type="primary">hemC</name>
    <name type="ordered locus">Bcenmc03_2429</name>
</gene>